<proteinExistence type="inferred from homology"/>
<gene>
    <name evidence="1" type="primary">ycf4</name>
</gene>
<keyword id="KW-0150">Chloroplast</keyword>
<keyword id="KW-0472">Membrane</keyword>
<keyword id="KW-0602">Photosynthesis</keyword>
<keyword id="KW-0934">Plastid</keyword>
<keyword id="KW-0793">Thylakoid</keyword>
<keyword id="KW-0812">Transmembrane</keyword>
<keyword id="KW-1133">Transmembrane helix</keyword>
<feature type="chain" id="PRO_0000275659" description="Photosystem I assembly protein Ycf4">
    <location>
        <begin position="1"/>
        <end position="184"/>
    </location>
</feature>
<feature type="transmembrane region" description="Helical" evidence="1">
    <location>
        <begin position="22"/>
        <end position="42"/>
    </location>
</feature>
<feature type="transmembrane region" description="Helical" evidence="1">
    <location>
        <begin position="57"/>
        <end position="77"/>
    </location>
</feature>
<reference key="1">
    <citation type="journal article" date="2006" name="Transgenic Res.">
        <title>Efficient and stable transformation of Lactuca sativa L. cv. Cisco (lettuce) plastids.</title>
        <authorList>
            <person name="Kanamoto H."/>
            <person name="Yamashita A."/>
            <person name="Asao H."/>
            <person name="Okumura S."/>
            <person name="Takase H."/>
            <person name="Hattori M."/>
            <person name="Yokota A."/>
            <person name="Tomizawa K."/>
        </authorList>
    </citation>
    <scope>NUCLEOTIDE SEQUENCE [LARGE SCALE GENOMIC DNA]</scope>
    <source>
        <strain>cv. Cisco</strain>
    </source>
</reference>
<reference key="2">
    <citation type="submission" date="2006-01" db="EMBL/GenBank/DDBJ databases">
        <title>A comparison of the first two published chloroplast genomes in Asteraceae: Lactuca and Helianthus.</title>
        <authorList>
            <person name="Timme R.E."/>
            <person name="Kuehl J.V."/>
            <person name="Boore J.L."/>
            <person name="Jansen R.K."/>
        </authorList>
    </citation>
    <scope>NUCLEOTIDE SEQUENCE [LARGE SCALE GENOMIC DNA]</scope>
    <source>
        <strain>cv. Salinas</strain>
    </source>
</reference>
<accession>Q332W7</accession>
<evidence type="ECO:0000255" key="1">
    <source>
        <dbReference type="HAMAP-Rule" id="MF_00437"/>
    </source>
</evidence>
<name>YCF4_LACSA</name>
<organism>
    <name type="scientific">Lactuca sativa</name>
    <name type="common">Garden lettuce</name>
    <dbReference type="NCBI Taxonomy" id="4236"/>
    <lineage>
        <taxon>Eukaryota</taxon>
        <taxon>Viridiplantae</taxon>
        <taxon>Streptophyta</taxon>
        <taxon>Embryophyta</taxon>
        <taxon>Tracheophyta</taxon>
        <taxon>Spermatophyta</taxon>
        <taxon>Magnoliopsida</taxon>
        <taxon>eudicotyledons</taxon>
        <taxon>Gunneridae</taxon>
        <taxon>Pentapetalae</taxon>
        <taxon>asterids</taxon>
        <taxon>campanulids</taxon>
        <taxon>Asterales</taxon>
        <taxon>Asteraceae</taxon>
        <taxon>Cichorioideae</taxon>
        <taxon>Cichorieae</taxon>
        <taxon>Lactucinae</taxon>
        <taxon>Lactuca</taxon>
    </lineage>
</organism>
<comment type="function">
    <text evidence="1">Seems to be required for the assembly of the photosystem I complex.</text>
</comment>
<comment type="subcellular location">
    <subcellularLocation>
        <location evidence="1">Plastid</location>
        <location evidence="1">Chloroplast thylakoid membrane</location>
        <topology evidence="1">Multi-pass membrane protein</topology>
    </subcellularLocation>
</comment>
<comment type="similarity">
    <text evidence="1">Belongs to the Ycf4 family.</text>
</comment>
<geneLocation type="chloroplast"/>
<dbReference type="EMBL" id="AP007232">
    <property type="protein sequence ID" value="BAE47605.1"/>
    <property type="molecule type" value="Genomic_DNA"/>
</dbReference>
<dbReference type="EMBL" id="DQ383816">
    <property type="protein sequence ID" value="ABD47244.1"/>
    <property type="molecule type" value="Genomic_DNA"/>
</dbReference>
<dbReference type="RefSeq" id="YP_398340.1">
    <property type="nucleotide sequence ID" value="NC_007578.1"/>
</dbReference>
<dbReference type="GeneID" id="3772832"/>
<dbReference type="KEGG" id="lsv:3772832"/>
<dbReference type="OrthoDB" id="1414221at2759"/>
<dbReference type="GO" id="GO:0009535">
    <property type="term" value="C:chloroplast thylakoid membrane"/>
    <property type="evidence" value="ECO:0007669"/>
    <property type="project" value="UniProtKB-SubCell"/>
</dbReference>
<dbReference type="GO" id="GO:0009522">
    <property type="term" value="C:photosystem I"/>
    <property type="evidence" value="ECO:0007669"/>
    <property type="project" value="InterPro"/>
</dbReference>
<dbReference type="GO" id="GO:0015979">
    <property type="term" value="P:photosynthesis"/>
    <property type="evidence" value="ECO:0007669"/>
    <property type="project" value="UniProtKB-UniRule"/>
</dbReference>
<dbReference type="HAMAP" id="MF_00437">
    <property type="entry name" value="Ycf4"/>
    <property type="match status" value="1"/>
</dbReference>
<dbReference type="InterPro" id="IPR003359">
    <property type="entry name" value="PSI_Ycf4_assembly"/>
</dbReference>
<dbReference type="PANTHER" id="PTHR33288">
    <property type="match status" value="1"/>
</dbReference>
<dbReference type="PANTHER" id="PTHR33288:SF4">
    <property type="entry name" value="PHOTOSYSTEM I ASSEMBLY PROTEIN YCF4"/>
    <property type="match status" value="1"/>
</dbReference>
<dbReference type="Pfam" id="PF02392">
    <property type="entry name" value="Ycf4"/>
    <property type="match status" value="1"/>
</dbReference>
<sequence length="184" mass="21192">MSCRSEHIWIEPITGARKTSNFCWAVILFLGSLGFLLVGTSSYLGRNLISLFPSQEIVFFPQGIVMSFYGIAGLFISSYLWCTISWNVGSGYDRFDRKDGIVCIFRWGFPGKNRRVFLQFLIKDIQSVRIEVKEGIYARRVLYMDIRGQGAIPLTRTDENFTPREMEQKAAELAYFLRVPIEVF</sequence>
<protein>
    <recommendedName>
        <fullName evidence="1">Photosystem I assembly protein Ycf4</fullName>
    </recommendedName>
</protein>